<protein>
    <recommendedName>
        <fullName evidence="1">Enolase</fullName>
        <ecNumber evidence="1">4.2.1.11</ecNumber>
    </recommendedName>
    <alternativeName>
        <fullName evidence="1">2-phospho-D-glycerate hydro-lyase</fullName>
    </alternativeName>
    <alternativeName>
        <fullName evidence="1">2-phosphoglycerate dehydratase</fullName>
    </alternativeName>
</protein>
<dbReference type="EC" id="4.2.1.11" evidence="1"/>
<dbReference type="EMBL" id="CR767821">
    <property type="protein sequence ID" value="CAH58212.1"/>
    <property type="molecule type" value="Genomic_DNA"/>
</dbReference>
<dbReference type="EMBL" id="CR925678">
    <property type="protein sequence ID" value="CAI27000.1"/>
    <property type="molecule type" value="Genomic_DNA"/>
</dbReference>
<dbReference type="RefSeq" id="WP_011155165.1">
    <property type="nucleotide sequence ID" value="NC_005295.2"/>
</dbReference>
<dbReference type="SMR" id="Q5HB46"/>
<dbReference type="GeneID" id="33057833"/>
<dbReference type="KEGG" id="eru:Erum4840"/>
<dbReference type="KEGG" id="erw:ERWE_CDS_05060"/>
<dbReference type="eggNOG" id="COG0148">
    <property type="taxonomic scope" value="Bacteria"/>
</dbReference>
<dbReference type="HOGENOM" id="CLU_031223_2_1_5"/>
<dbReference type="UniPathway" id="UPA00109">
    <property type="reaction ID" value="UER00187"/>
</dbReference>
<dbReference type="Proteomes" id="UP000001021">
    <property type="component" value="Chromosome"/>
</dbReference>
<dbReference type="GO" id="GO:0009986">
    <property type="term" value="C:cell surface"/>
    <property type="evidence" value="ECO:0007669"/>
    <property type="project" value="UniProtKB-SubCell"/>
</dbReference>
<dbReference type="GO" id="GO:0005576">
    <property type="term" value="C:extracellular region"/>
    <property type="evidence" value="ECO:0007669"/>
    <property type="project" value="UniProtKB-SubCell"/>
</dbReference>
<dbReference type="GO" id="GO:0000015">
    <property type="term" value="C:phosphopyruvate hydratase complex"/>
    <property type="evidence" value="ECO:0007669"/>
    <property type="project" value="InterPro"/>
</dbReference>
<dbReference type="GO" id="GO:0000287">
    <property type="term" value="F:magnesium ion binding"/>
    <property type="evidence" value="ECO:0007669"/>
    <property type="project" value="UniProtKB-UniRule"/>
</dbReference>
<dbReference type="GO" id="GO:0004634">
    <property type="term" value="F:phosphopyruvate hydratase activity"/>
    <property type="evidence" value="ECO:0007669"/>
    <property type="project" value="UniProtKB-UniRule"/>
</dbReference>
<dbReference type="GO" id="GO:0006096">
    <property type="term" value="P:glycolytic process"/>
    <property type="evidence" value="ECO:0007669"/>
    <property type="project" value="UniProtKB-UniRule"/>
</dbReference>
<dbReference type="CDD" id="cd03313">
    <property type="entry name" value="enolase"/>
    <property type="match status" value="1"/>
</dbReference>
<dbReference type="Gene3D" id="3.20.20.120">
    <property type="entry name" value="Enolase-like C-terminal domain"/>
    <property type="match status" value="1"/>
</dbReference>
<dbReference type="Gene3D" id="3.30.390.10">
    <property type="entry name" value="Enolase-like, N-terminal domain"/>
    <property type="match status" value="1"/>
</dbReference>
<dbReference type="HAMAP" id="MF_00318">
    <property type="entry name" value="Enolase"/>
    <property type="match status" value="1"/>
</dbReference>
<dbReference type="InterPro" id="IPR000941">
    <property type="entry name" value="Enolase"/>
</dbReference>
<dbReference type="InterPro" id="IPR036849">
    <property type="entry name" value="Enolase-like_C_sf"/>
</dbReference>
<dbReference type="InterPro" id="IPR029017">
    <property type="entry name" value="Enolase-like_N"/>
</dbReference>
<dbReference type="InterPro" id="IPR020810">
    <property type="entry name" value="Enolase_C"/>
</dbReference>
<dbReference type="InterPro" id="IPR020809">
    <property type="entry name" value="Enolase_CS"/>
</dbReference>
<dbReference type="InterPro" id="IPR020811">
    <property type="entry name" value="Enolase_N"/>
</dbReference>
<dbReference type="NCBIfam" id="TIGR01060">
    <property type="entry name" value="eno"/>
    <property type="match status" value="1"/>
</dbReference>
<dbReference type="PANTHER" id="PTHR11902">
    <property type="entry name" value="ENOLASE"/>
    <property type="match status" value="1"/>
</dbReference>
<dbReference type="PANTHER" id="PTHR11902:SF1">
    <property type="entry name" value="ENOLASE"/>
    <property type="match status" value="1"/>
</dbReference>
<dbReference type="Pfam" id="PF00113">
    <property type="entry name" value="Enolase_C"/>
    <property type="match status" value="1"/>
</dbReference>
<dbReference type="Pfam" id="PF03952">
    <property type="entry name" value="Enolase_N"/>
    <property type="match status" value="1"/>
</dbReference>
<dbReference type="PIRSF" id="PIRSF001400">
    <property type="entry name" value="Enolase"/>
    <property type="match status" value="1"/>
</dbReference>
<dbReference type="PRINTS" id="PR00148">
    <property type="entry name" value="ENOLASE"/>
</dbReference>
<dbReference type="SFLD" id="SFLDF00002">
    <property type="entry name" value="enolase"/>
    <property type="match status" value="1"/>
</dbReference>
<dbReference type="SFLD" id="SFLDG00178">
    <property type="entry name" value="enolase"/>
    <property type="match status" value="1"/>
</dbReference>
<dbReference type="SMART" id="SM01192">
    <property type="entry name" value="Enolase_C"/>
    <property type="match status" value="1"/>
</dbReference>
<dbReference type="SMART" id="SM01193">
    <property type="entry name" value="Enolase_N"/>
    <property type="match status" value="1"/>
</dbReference>
<dbReference type="SUPFAM" id="SSF51604">
    <property type="entry name" value="Enolase C-terminal domain-like"/>
    <property type="match status" value="1"/>
</dbReference>
<dbReference type="SUPFAM" id="SSF54826">
    <property type="entry name" value="Enolase N-terminal domain-like"/>
    <property type="match status" value="1"/>
</dbReference>
<dbReference type="PROSITE" id="PS00164">
    <property type="entry name" value="ENOLASE"/>
    <property type="match status" value="1"/>
</dbReference>
<name>ENO_EHRRW</name>
<sequence length="421" mass="46645">MANVKINNISARQILDSRGYPTIEVQITLSNNVFAKASIPSGASVGKFEAVELRDHDTNYYHGYGVTKAVNLINSEIGQKIIKLETLDQEKIDNALIEIDGTNNKSRVGANSILAISLAVAKAAASTLNIPLYQYLGGITAKILPTPLINIINGGMHADNNLDFQEFMIIPHGANSFEDAIRMSSEVFHTLKKILKQKQYNTNVGDEGGFAPNIKDNTEVFDIIIDAIEKSGYKVYKDFSLGLDVAASTFYKNEKYKFSDYQFSTHELVEYYKNIVTQYPIISLEDPIAEEDTLGWKMITKELGDKIQIVGDDLFVTNCKLIKNGIDNNMANAVLIKPNQIGTLTETLNAIRLAQKNNYNVILSHRSGETNDTTISHIAVAVNCGQIKTGSLSRSERLAKYNELLYIEKLLNTSAIYQGML</sequence>
<comment type="function">
    <text evidence="1">Catalyzes the reversible conversion of 2-phosphoglycerate (2-PG) into phosphoenolpyruvate (PEP). It is essential for the degradation of carbohydrates via glycolysis.</text>
</comment>
<comment type="catalytic activity">
    <reaction evidence="1">
        <text>(2R)-2-phosphoglycerate = phosphoenolpyruvate + H2O</text>
        <dbReference type="Rhea" id="RHEA:10164"/>
        <dbReference type="ChEBI" id="CHEBI:15377"/>
        <dbReference type="ChEBI" id="CHEBI:58289"/>
        <dbReference type="ChEBI" id="CHEBI:58702"/>
        <dbReference type="EC" id="4.2.1.11"/>
    </reaction>
</comment>
<comment type="cofactor">
    <cofactor evidence="1">
        <name>Mg(2+)</name>
        <dbReference type="ChEBI" id="CHEBI:18420"/>
    </cofactor>
    <text evidence="1">Binds a second Mg(2+) ion via substrate during catalysis.</text>
</comment>
<comment type="pathway">
    <text evidence="1">Carbohydrate degradation; glycolysis; pyruvate from D-glyceraldehyde 3-phosphate: step 4/5.</text>
</comment>
<comment type="subcellular location">
    <subcellularLocation>
        <location evidence="1">Cytoplasm</location>
    </subcellularLocation>
    <subcellularLocation>
        <location evidence="1">Secreted</location>
    </subcellularLocation>
    <subcellularLocation>
        <location evidence="1">Cell surface</location>
    </subcellularLocation>
    <text evidence="1">Fractions of enolase are present in both the cytoplasm and on the cell surface.</text>
</comment>
<comment type="similarity">
    <text evidence="1">Belongs to the enolase family.</text>
</comment>
<accession>Q5HB46</accession>
<accession>Q5FEI6</accession>
<evidence type="ECO:0000255" key="1">
    <source>
        <dbReference type="HAMAP-Rule" id="MF_00318"/>
    </source>
</evidence>
<keyword id="KW-0963">Cytoplasm</keyword>
<keyword id="KW-0324">Glycolysis</keyword>
<keyword id="KW-0456">Lyase</keyword>
<keyword id="KW-0460">Magnesium</keyword>
<keyword id="KW-0479">Metal-binding</keyword>
<keyword id="KW-0964">Secreted</keyword>
<reference key="1">
    <citation type="journal article" date="2005" name="Proc. Natl. Acad. Sci. U.S.A.">
        <title>The genome of the heartwater agent Ehrlichia ruminantium contains multiple tandem repeats of actively variable copy number.</title>
        <authorList>
            <person name="Collins N.E."/>
            <person name="Liebenberg J."/>
            <person name="de Villiers E.P."/>
            <person name="Brayton K.A."/>
            <person name="Louw E."/>
            <person name="Pretorius A."/>
            <person name="Faber F.E."/>
            <person name="van Heerden H."/>
            <person name="Josemans A."/>
            <person name="van Kleef M."/>
            <person name="Steyn H.C."/>
            <person name="van Strijp M.F."/>
            <person name="Zweygarth E."/>
            <person name="Jongejan F."/>
            <person name="Maillard J.C."/>
            <person name="Berthier D."/>
            <person name="Botha M."/>
            <person name="Joubert F."/>
            <person name="Corton C.H."/>
            <person name="Thomson N.R."/>
            <person name="Allsopp M.T."/>
            <person name="Allsopp B.A."/>
        </authorList>
    </citation>
    <scope>NUCLEOTIDE SEQUENCE [LARGE SCALE GENOMIC DNA]</scope>
    <source>
        <strain>Welgevonden</strain>
    </source>
</reference>
<reference key="2">
    <citation type="journal article" date="2006" name="J. Bacteriol.">
        <title>Comparative genomic analysis of three strains of Ehrlichia ruminantium reveals an active process of genome size plasticity.</title>
        <authorList>
            <person name="Frutos R."/>
            <person name="Viari A."/>
            <person name="Ferraz C."/>
            <person name="Morgat A."/>
            <person name="Eychenie S."/>
            <person name="Kandassamy Y."/>
            <person name="Chantal I."/>
            <person name="Bensaid A."/>
            <person name="Coissac E."/>
            <person name="Vachiery N."/>
            <person name="Demaille J."/>
            <person name="Martinez D."/>
        </authorList>
    </citation>
    <scope>NUCLEOTIDE SEQUENCE [LARGE SCALE GENOMIC DNA]</scope>
    <source>
        <strain>Welgevonden</strain>
    </source>
</reference>
<proteinExistence type="inferred from homology"/>
<gene>
    <name evidence="1" type="primary">eno</name>
    <name type="ordered locus">Erum4840</name>
    <name type="ordered locus">ERWE_CDS_05060</name>
</gene>
<feature type="chain" id="PRO_0000267032" description="Enolase">
    <location>
        <begin position="1"/>
        <end position="421"/>
    </location>
</feature>
<feature type="active site" description="Proton donor" evidence="1">
    <location>
        <position position="207"/>
    </location>
</feature>
<feature type="active site" description="Proton acceptor" evidence="1">
    <location>
        <position position="337"/>
    </location>
</feature>
<feature type="binding site" evidence="1">
    <location>
        <position position="165"/>
    </location>
    <ligand>
        <name>(2R)-2-phosphoglycerate</name>
        <dbReference type="ChEBI" id="CHEBI:58289"/>
    </ligand>
</feature>
<feature type="binding site" evidence="1">
    <location>
        <position position="244"/>
    </location>
    <ligand>
        <name>Mg(2+)</name>
        <dbReference type="ChEBI" id="CHEBI:18420"/>
    </ligand>
</feature>
<feature type="binding site" evidence="1">
    <location>
        <position position="285"/>
    </location>
    <ligand>
        <name>Mg(2+)</name>
        <dbReference type="ChEBI" id="CHEBI:18420"/>
    </ligand>
</feature>
<feature type="binding site" evidence="1">
    <location>
        <position position="312"/>
    </location>
    <ligand>
        <name>Mg(2+)</name>
        <dbReference type="ChEBI" id="CHEBI:18420"/>
    </ligand>
</feature>
<feature type="binding site" evidence="1">
    <location>
        <position position="337"/>
    </location>
    <ligand>
        <name>(2R)-2-phosphoglycerate</name>
        <dbReference type="ChEBI" id="CHEBI:58289"/>
    </ligand>
</feature>
<feature type="binding site" evidence="1">
    <location>
        <position position="366"/>
    </location>
    <ligand>
        <name>(2R)-2-phosphoglycerate</name>
        <dbReference type="ChEBI" id="CHEBI:58289"/>
    </ligand>
</feature>
<feature type="binding site" evidence="1">
    <location>
        <position position="367"/>
    </location>
    <ligand>
        <name>(2R)-2-phosphoglycerate</name>
        <dbReference type="ChEBI" id="CHEBI:58289"/>
    </ligand>
</feature>
<feature type="binding site" evidence="1">
    <location>
        <position position="388"/>
    </location>
    <ligand>
        <name>(2R)-2-phosphoglycerate</name>
        <dbReference type="ChEBI" id="CHEBI:58289"/>
    </ligand>
</feature>
<organism>
    <name type="scientific">Ehrlichia ruminantium (strain Welgevonden)</name>
    <dbReference type="NCBI Taxonomy" id="254945"/>
    <lineage>
        <taxon>Bacteria</taxon>
        <taxon>Pseudomonadati</taxon>
        <taxon>Pseudomonadota</taxon>
        <taxon>Alphaproteobacteria</taxon>
        <taxon>Rickettsiales</taxon>
        <taxon>Anaplasmataceae</taxon>
        <taxon>Ehrlichia</taxon>
    </lineage>
</organism>